<reference key="1">
    <citation type="submission" date="2008-06" db="EMBL/GenBank/DDBJ databases">
        <title>Complete sequence of Pelodictyon phaeoclathratiforme BU-1.</title>
        <authorList>
            <consortium name="US DOE Joint Genome Institute"/>
            <person name="Lucas S."/>
            <person name="Copeland A."/>
            <person name="Lapidus A."/>
            <person name="Glavina del Rio T."/>
            <person name="Dalin E."/>
            <person name="Tice H."/>
            <person name="Bruce D."/>
            <person name="Goodwin L."/>
            <person name="Pitluck S."/>
            <person name="Schmutz J."/>
            <person name="Larimer F."/>
            <person name="Land M."/>
            <person name="Hauser L."/>
            <person name="Kyrpides N."/>
            <person name="Mikhailova N."/>
            <person name="Liu Z."/>
            <person name="Li T."/>
            <person name="Zhao F."/>
            <person name="Overmann J."/>
            <person name="Bryant D.A."/>
            <person name="Richardson P."/>
        </authorList>
    </citation>
    <scope>NUCLEOTIDE SEQUENCE [LARGE SCALE GENOMIC DNA]</scope>
    <source>
        <strain>DSM 5477 / BU-1</strain>
    </source>
</reference>
<feature type="chain" id="PRO_1000120783" description="Small ribosomal subunit protein bS6">
    <location>
        <begin position="1"/>
        <end position="134"/>
    </location>
</feature>
<protein>
    <recommendedName>
        <fullName evidence="1">Small ribosomal subunit protein bS6</fullName>
    </recommendedName>
    <alternativeName>
        <fullName evidence="2">30S ribosomal protein S6</fullName>
    </alternativeName>
</protein>
<name>RS6_PELPB</name>
<dbReference type="EMBL" id="CP001110">
    <property type="protein sequence ID" value="ACF42463.1"/>
    <property type="molecule type" value="Genomic_DNA"/>
</dbReference>
<dbReference type="RefSeq" id="WP_012506961.1">
    <property type="nucleotide sequence ID" value="NC_011060.1"/>
</dbReference>
<dbReference type="SMR" id="B4SB42"/>
<dbReference type="STRING" id="324925.Ppha_0107"/>
<dbReference type="KEGG" id="pph:Ppha_0107"/>
<dbReference type="eggNOG" id="COG0360">
    <property type="taxonomic scope" value="Bacteria"/>
</dbReference>
<dbReference type="HOGENOM" id="CLU_113441_4_1_10"/>
<dbReference type="OrthoDB" id="9812702at2"/>
<dbReference type="Proteomes" id="UP000002724">
    <property type="component" value="Chromosome"/>
</dbReference>
<dbReference type="GO" id="GO:0005737">
    <property type="term" value="C:cytoplasm"/>
    <property type="evidence" value="ECO:0007669"/>
    <property type="project" value="UniProtKB-ARBA"/>
</dbReference>
<dbReference type="GO" id="GO:1990904">
    <property type="term" value="C:ribonucleoprotein complex"/>
    <property type="evidence" value="ECO:0007669"/>
    <property type="project" value="UniProtKB-KW"/>
</dbReference>
<dbReference type="GO" id="GO:0005840">
    <property type="term" value="C:ribosome"/>
    <property type="evidence" value="ECO:0007669"/>
    <property type="project" value="UniProtKB-KW"/>
</dbReference>
<dbReference type="GO" id="GO:0070181">
    <property type="term" value="F:small ribosomal subunit rRNA binding"/>
    <property type="evidence" value="ECO:0007669"/>
    <property type="project" value="TreeGrafter"/>
</dbReference>
<dbReference type="GO" id="GO:0003735">
    <property type="term" value="F:structural constituent of ribosome"/>
    <property type="evidence" value="ECO:0007669"/>
    <property type="project" value="InterPro"/>
</dbReference>
<dbReference type="GO" id="GO:0006412">
    <property type="term" value="P:translation"/>
    <property type="evidence" value="ECO:0007669"/>
    <property type="project" value="UniProtKB-UniRule"/>
</dbReference>
<dbReference type="CDD" id="cd00473">
    <property type="entry name" value="bS6"/>
    <property type="match status" value="1"/>
</dbReference>
<dbReference type="Gene3D" id="3.30.70.60">
    <property type="match status" value="1"/>
</dbReference>
<dbReference type="HAMAP" id="MF_00360">
    <property type="entry name" value="Ribosomal_bS6"/>
    <property type="match status" value="1"/>
</dbReference>
<dbReference type="InterPro" id="IPR000529">
    <property type="entry name" value="Ribosomal_bS6"/>
</dbReference>
<dbReference type="InterPro" id="IPR035980">
    <property type="entry name" value="Ribosomal_bS6_sf"/>
</dbReference>
<dbReference type="InterPro" id="IPR020814">
    <property type="entry name" value="Ribosomal_S6_plastid/chlpt"/>
</dbReference>
<dbReference type="InterPro" id="IPR014717">
    <property type="entry name" value="Transl_elong_EF1B/ribsomal_bS6"/>
</dbReference>
<dbReference type="NCBIfam" id="TIGR00166">
    <property type="entry name" value="S6"/>
    <property type="match status" value="1"/>
</dbReference>
<dbReference type="PANTHER" id="PTHR21011">
    <property type="entry name" value="MITOCHONDRIAL 28S RIBOSOMAL PROTEIN S6"/>
    <property type="match status" value="1"/>
</dbReference>
<dbReference type="PANTHER" id="PTHR21011:SF1">
    <property type="entry name" value="SMALL RIBOSOMAL SUBUNIT PROTEIN BS6M"/>
    <property type="match status" value="1"/>
</dbReference>
<dbReference type="Pfam" id="PF01250">
    <property type="entry name" value="Ribosomal_S6"/>
    <property type="match status" value="1"/>
</dbReference>
<dbReference type="SUPFAM" id="SSF54995">
    <property type="entry name" value="Ribosomal protein S6"/>
    <property type="match status" value="1"/>
</dbReference>
<gene>
    <name evidence="1" type="primary">rpsF</name>
    <name type="ordered locus">Ppha_0107</name>
</gene>
<organism>
    <name type="scientific">Pelodictyon phaeoclathratiforme (strain DSM 5477 / BU-1)</name>
    <dbReference type="NCBI Taxonomy" id="324925"/>
    <lineage>
        <taxon>Bacteria</taxon>
        <taxon>Pseudomonadati</taxon>
        <taxon>Chlorobiota</taxon>
        <taxon>Chlorobiia</taxon>
        <taxon>Chlorobiales</taxon>
        <taxon>Chlorobiaceae</taxon>
        <taxon>Chlorobium/Pelodictyon group</taxon>
        <taxon>Pelodictyon</taxon>
    </lineage>
</organism>
<evidence type="ECO:0000255" key="1">
    <source>
        <dbReference type="HAMAP-Rule" id="MF_00360"/>
    </source>
</evidence>
<evidence type="ECO:0000305" key="2"/>
<accession>B4SB42</accession>
<proteinExistence type="inferred from homology"/>
<keyword id="KW-1185">Reference proteome</keyword>
<keyword id="KW-0687">Ribonucleoprotein</keyword>
<keyword id="KW-0689">Ribosomal protein</keyword>
<keyword id="KW-0694">RNA-binding</keyword>
<keyword id="KW-0699">rRNA-binding</keyword>
<comment type="function">
    <text evidence="1">Binds together with bS18 to 16S ribosomal RNA.</text>
</comment>
<comment type="similarity">
    <text evidence="1">Belongs to the bacterial ribosomal protein bS6 family.</text>
</comment>
<sequence>METNKLYECTLIIDGGLQDEAIAAAMALVQRVITEKGGSISSVLEIGRRKTAYPIKKKTIGYYAHIEFTAATSVIAEVEKVIRYEEDLLRYLIIHLTSALLEMRKRVEKYSVVIGSPEDSALAEAAAASDTVAK</sequence>